<keyword id="KW-0067">ATP-binding</keyword>
<keyword id="KW-0963">Cytoplasm</keyword>
<keyword id="KW-0418">Kinase</keyword>
<keyword id="KW-0547">Nucleotide-binding</keyword>
<keyword id="KW-0808">Transferase</keyword>
<evidence type="ECO:0000255" key="1">
    <source>
        <dbReference type="HAMAP-Rule" id="MF_00239"/>
    </source>
</evidence>
<feature type="chain" id="PRO_1000100708" description="Cytidylate kinase">
    <location>
        <begin position="1"/>
        <end position="192"/>
    </location>
</feature>
<feature type="binding site" evidence="1">
    <location>
        <begin position="7"/>
        <end position="15"/>
    </location>
    <ligand>
        <name>ATP</name>
        <dbReference type="ChEBI" id="CHEBI:30616"/>
    </ligand>
</feature>
<sequence length="192" mass="21632">MLVTISGPPGSGKSTVASTLADHLSYEHISGGDIFRGLAEDRDLTLAEFNELAEEDPQIDKDLDRRLRETARGRDDIVLESRLAGWMAGEYADIKIWLDAPMSVRARRIAEREDKTPAAARAETEAREESETQRYEEYYAIDFDDITIYDLSVNTARWGPDAVTDIVLDAVDAYQAERDEGPTPIENVRYQF</sequence>
<organism>
    <name type="scientific">Halobacterium salinarum (strain ATCC 29341 / DSM 671 / R1)</name>
    <dbReference type="NCBI Taxonomy" id="478009"/>
    <lineage>
        <taxon>Archaea</taxon>
        <taxon>Methanobacteriati</taxon>
        <taxon>Methanobacteriota</taxon>
        <taxon>Stenosarchaea group</taxon>
        <taxon>Halobacteria</taxon>
        <taxon>Halobacteriales</taxon>
        <taxon>Halobacteriaceae</taxon>
        <taxon>Halobacterium</taxon>
        <taxon>Halobacterium salinarum NRC-34001</taxon>
    </lineage>
</organism>
<accession>B0R685</accession>
<name>KCY_HALS3</name>
<proteinExistence type="inferred from homology"/>
<comment type="catalytic activity">
    <reaction evidence="1">
        <text>CMP + ATP = CDP + ADP</text>
        <dbReference type="Rhea" id="RHEA:11600"/>
        <dbReference type="ChEBI" id="CHEBI:30616"/>
        <dbReference type="ChEBI" id="CHEBI:58069"/>
        <dbReference type="ChEBI" id="CHEBI:60377"/>
        <dbReference type="ChEBI" id="CHEBI:456216"/>
        <dbReference type="EC" id="2.7.4.25"/>
    </reaction>
</comment>
<comment type="catalytic activity">
    <reaction evidence="1">
        <text>dCMP + ATP = dCDP + ADP</text>
        <dbReference type="Rhea" id="RHEA:25094"/>
        <dbReference type="ChEBI" id="CHEBI:30616"/>
        <dbReference type="ChEBI" id="CHEBI:57566"/>
        <dbReference type="ChEBI" id="CHEBI:58593"/>
        <dbReference type="ChEBI" id="CHEBI:456216"/>
        <dbReference type="EC" id="2.7.4.25"/>
    </reaction>
</comment>
<comment type="subcellular location">
    <subcellularLocation>
        <location evidence="1">Cytoplasm</location>
    </subcellularLocation>
</comment>
<comment type="similarity">
    <text evidence="1">Belongs to the cytidylate kinase family. Type 2 subfamily.</text>
</comment>
<reference key="1">
    <citation type="journal article" date="2008" name="Genomics">
        <title>Evolution in the laboratory: the genome of Halobacterium salinarum strain R1 compared to that of strain NRC-1.</title>
        <authorList>
            <person name="Pfeiffer F."/>
            <person name="Schuster S.C."/>
            <person name="Broicher A."/>
            <person name="Falb M."/>
            <person name="Palm P."/>
            <person name="Rodewald K."/>
            <person name="Ruepp A."/>
            <person name="Soppa J."/>
            <person name="Tittor J."/>
            <person name="Oesterhelt D."/>
        </authorList>
    </citation>
    <scope>NUCLEOTIDE SEQUENCE [LARGE SCALE GENOMIC DNA]</scope>
    <source>
        <strain>ATCC 29341 / DSM 671 / R1</strain>
    </source>
</reference>
<dbReference type="EC" id="2.7.4.25" evidence="1"/>
<dbReference type="EMBL" id="AM774415">
    <property type="protein sequence ID" value="CAP14254.1"/>
    <property type="molecule type" value="Genomic_DNA"/>
</dbReference>
<dbReference type="RefSeq" id="WP_010903263.1">
    <property type="nucleotide sequence ID" value="NC_010364.1"/>
</dbReference>
<dbReference type="SMR" id="B0R685"/>
<dbReference type="EnsemblBacteria" id="CAP14254">
    <property type="protein sequence ID" value="CAP14254"/>
    <property type="gene ID" value="OE_3429F"/>
</dbReference>
<dbReference type="GeneID" id="89349967"/>
<dbReference type="KEGG" id="hsl:OE_3429F"/>
<dbReference type="HOGENOM" id="CLU_079959_1_0_2"/>
<dbReference type="PhylomeDB" id="B0R685"/>
<dbReference type="Proteomes" id="UP000001321">
    <property type="component" value="Chromosome"/>
</dbReference>
<dbReference type="GO" id="GO:0005737">
    <property type="term" value="C:cytoplasm"/>
    <property type="evidence" value="ECO:0007669"/>
    <property type="project" value="UniProtKB-SubCell"/>
</dbReference>
<dbReference type="GO" id="GO:0005524">
    <property type="term" value="F:ATP binding"/>
    <property type="evidence" value="ECO:0007669"/>
    <property type="project" value="UniProtKB-UniRule"/>
</dbReference>
<dbReference type="GO" id="GO:0036430">
    <property type="term" value="F:CMP kinase activity"/>
    <property type="evidence" value="ECO:0007669"/>
    <property type="project" value="RHEA"/>
</dbReference>
<dbReference type="GO" id="GO:0036431">
    <property type="term" value="F:dCMP kinase activity"/>
    <property type="evidence" value="ECO:0007669"/>
    <property type="project" value="RHEA"/>
</dbReference>
<dbReference type="GO" id="GO:0006220">
    <property type="term" value="P:pyrimidine nucleotide metabolic process"/>
    <property type="evidence" value="ECO:0007669"/>
    <property type="project" value="UniProtKB-UniRule"/>
</dbReference>
<dbReference type="CDD" id="cd02020">
    <property type="entry name" value="CMPK"/>
    <property type="match status" value="1"/>
</dbReference>
<dbReference type="Gene3D" id="3.40.50.300">
    <property type="entry name" value="P-loop containing nucleotide triphosphate hydrolases"/>
    <property type="match status" value="1"/>
</dbReference>
<dbReference type="HAMAP" id="MF_00239">
    <property type="entry name" value="Cytidyl_kinase_type2"/>
    <property type="match status" value="1"/>
</dbReference>
<dbReference type="InterPro" id="IPR011892">
    <property type="entry name" value="Cyt_kin_arch"/>
</dbReference>
<dbReference type="InterPro" id="IPR011994">
    <property type="entry name" value="Cytidylate_kinase_dom"/>
</dbReference>
<dbReference type="InterPro" id="IPR027417">
    <property type="entry name" value="P-loop_NTPase"/>
</dbReference>
<dbReference type="NCBIfam" id="TIGR02173">
    <property type="entry name" value="cyt_kin_arch"/>
    <property type="match status" value="1"/>
</dbReference>
<dbReference type="Pfam" id="PF13189">
    <property type="entry name" value="Cytidylate_kin2"/>
    <property type="match status" value="1"/>
</dbReference>
<dbReference type="SUPFAM" id="SSF52540">
    <property type="entry name" value="P-loop containing nucleoside triphosphate hydrolases"/>
    <property type="match status" value="1"/>
</dbReference>
<protein>
    <recommendedName>
        <fullName evidence="1">Cytidylate kinase</fullName>
        <shortName evidence="1">CK</shortName>
        <ecNumber evidence="1">2.7.4.25</ecNumber>
    </recommendedName>
    <alternativeName>
        <fullName evidence="1">Cytidine monophosphate kinase</fullName>
        <shortName evidence="1">CMP kinase</shortName>
    </alternativeName>
</protein>
<gene>
    <name evidence="1" type="primary">cmk</name>
    <name type="ordered locus">OE_3429F</name>
</gene>